<feature type="signal peptide" evidence="4">
    <location>
        <begin position="1"/>
        <end position="31"/>
    </location>
</feature>
<feature type="chain" id="PRO_0000007218" description="Dickkopf-related protein 1">
    <location>
        <begin position="32"/>
        <end position="266"/>
    </location>
</feature>
<feature type="region of interest" description="DKK-type Cys-1">
    <location>
        <begin position="85"/>
        <end position="138"/>
    </location>
</feature>
<feature type="region of interest" description="DKK-type Cys-2">
    <location>
        <begin position="189"/>
        <end position="263"/>
    </location>
</feature>
<feature type="glycosylation site" description="O-linked (GalNAc...) serine" evidence="8">
    <location>
        <position position="61"/>
    </location>
</feature>
<feature type="glycosylation site" description="N-linked (GlcNAc...) asparagine" evidence="8">
    <location>
        <position position="256"/>
    </location>
</feature>
<feature type="disulfide bond">
    <location>
        <begin position="85"/>
        <end position="97"/>
    </location>
</feature>
<feature type="disulfide bond">
    <location>
        <begin position="91"/>
        <end position="111"/>
    </location>
</feature>
<feature type="disulfide bond">
    <location>
        <begin position="114"/>
        <end position="128"/>
    </location>
</feature>
<feature type="disulfide bond">
    <location>
        <begin position="121"/>
        <end position="133"/>
    </location>
</feature>
<feature type="disulfide bond">
    <location>
        <begin position="127"/>
        <end position="138"/>
    </location>
</feature>
<feature type="disulfide bond">
    <location>
        <begin position="189"/>
        <end position="201"/>
    </location>
</feature>
<feature type="disulfide bond">
    <location>
        <begin position="195"/>
        <end position="210"/>
    </location>
</feature>
<feature type="disulfide bond">
    <location>
        <begin position="200"/>
        <end position="237"/>
    </location>
</feature>
<feature type="disulfide bond">
    <location>
        <begin position="220"/>
        <end position="245"/>
    </location>
</feature>
<feature type="disulfide bond">
    <location>
        <begin position="239"/>
        <end position="263"/>
    </location>
</feature>
<feature type="helix" evidence="13">
    <location>
        <begin position="192"/>
        <end position="194"/>
    </location>
</feature>
<feature type="strand" evidence="13">
    <location>
        <begin position="199"/>
        <end position="204"/>
    </location>
</feature>
<feature type="strand" evidence="13">
    <location>
        <begin position="207"/>
        <end position="212"/>
    </location>
</feature>
<feature type="strand" evidence="14">
    <location>
        <begin position="218"/>
        <end position="220"/>
    </location>
</feature>
<feature type="helix" evidence="13">
    <location>
        <begin position="226"/>
        <end position="231"/>
    </location>
</feature>
<feature type="strand" evidence="13">
    <location>
        <begin position="243"/>
        <end position="247"/>
    </location>
</feature>
<feature type="strand" evidence="13">
    <location>
        <begin position="261"/>
        <end position="265"/>
    </location>
</feature>
<dbReference type="EMBL" id="AF127563">
    <property type="protein sequence ID" value="AAD21087.1"/>
    <property type="molecule type" value="mRNA"/>
</dbReference>
<dbReference type="EMBL" id="AF177394">
    <property type="protein sequence ID" value="AAF02674.1"/>
    <property type="molecule type" value="mRNA"/>
</dbReference>
<dbReference type="EMBL" id="AB020315">
    <property type="protein sequence ID" value="BAA34651.1"/>
    <property type="molecule type" value="Genomic_DNA"/>
</dbReference>
<dbReference type="EMBL" id="AF261158">
    <property type="protein sequence ID" value="AAG15544.1"/>
    <property type="molecule type" value="Genomic_DNA"/>
</dbReference>
<dbReference type="EMBL" id="AF261157">
    <property type="protein sequence ID" value="AAG15544.1"/>
    <property type="status" value="JOINED"/>
    <property type="molecule type" value="Genomic_DNA"/>
</dbReference>
<dbReference type="EMBL" id="AY359005">
    <property type="protein sequence ID" value="AAQ89364.1"/>
    <property type="molecule type" value="mRNA"/>
</dbReference>
<dbReference type="EMBL" id="AK314902">
    <property type="protein sequence ID" value="BAG37416.1"/>
    <property type="molecule type" value="mRNA"/>
</dbReference>
<dbReference type="EMBL" id="CH471083">
    <property type="protein sequence ID" value="EAW54144.1"/>
    <property type="molecule type" value="Genomic_DNA"/>
</dbReference>
<dbReference type="EMBL" id="BC001539">
    <property type="protein sequence ID" value="AAH01539.1"/>
    <property type="molecule type" value="mRNA"/>
</dbReference>
<dbReference type="CCDS" id="CCDS7246.1"/>
<dbReference type="RefSeq" id="NP_036374.1">
    <property type="nucleotide sequence ID" value="NM_012242.4"/>
</dbReference>
<dbReference type="PDB" id="3S2K">
    <property type="method" value="X-ray"/>
    <property type="resolution" value="2.80 A"/>
    <property type="chains" value="C=178-266"/>
</dbReference>
<dbReference type="PDB" id="3S8V">
    <property type="method" value="X-ray"/>
    <property type="resolution" value="3.10 A"/>
    <property type="chains" value="X=183-266"/>
</dbReference>
<dbReference type="PDB" id="3SOQ">
    <property type="method" value="X-ray"/>
    <property type="resolution" value="1.90 A"/>
    <property type="chains" value="Z=38-44"/>
</dbReference>
<dbReference type="PDB" id="5FWW">
    <property type="method" value="X-ray"/>
    <property type="resolution" value="3.50 A"/>
    <property type="chains" value="C=182-266"/>
</dbReference>
<dbReference type="PDB" id="5GJE">
    <property type="method" value="EM"/>
    <property type="resolution" value="21.00 A"/>
    <property type="chains" value="C=182-266"/>
</dbReference>
<dbReference type="PDBsum" id="3S2K"/>
<dbReference type="PDBsum" id="3S8V"/>
<dbReference type="PDBsum" id="3SOQ"/>
<dbReference type="PDBsum" id="5FWW"/>
<dbReference type="PDBsum" id="5GJE"/>
<dbReference type="EMDB" id="EMD-9501"/>
<dbReference type="SMR" id="O94907"/>
<dbReference type="BioGRID" id="116599">
    <property type="interactions" value="25"/>
</dbReference>
<dbReference type="CORUM" id="O94907"/>
<dbReference type="DIP" id="DIP-46461N"/>
<dbReference type="ELM" id="O94907"/>
<dbReference type="FunCoup" id="O94907">
    <property type="interactions" value="399"/>
</dbReference>
<dbReference type="IntAct" id="O94907">
    <property type="interactions" value="15"/>
</dbReference>
<dbReference type="MINT" id="O94907"/>
<dbReference type="STRING" id="9606.ENSP00000363081"/>
<dbReference type="BindingDB" id="O94907"/>
<dbReference type="ChEMBL" id="CHEMBL6024"/>
<dbReference type="GlyCosmos" id="O94907">
    <property type="glycosylation" value="2 sites, No reported glycans"/>
</dbReference>
<dbReference type="GlyGen" id="O94907">
    <property type="glycosylation" value="18 sites, 1 O-linked glycan (13 sites)"/>
</dbReference>
<dbReference type="iPTMnet" id="O94907"/>
<dbReference type="PhosphoSitePlus" id="O94907"/>
<dbReference type="BioMuta" id="DKK1"/>
<dbReference type="jPOST" id="O94907"/>
<dbReference type="MassIVE" id="O94907"/>
<dbReference type="PaxDb" id="9606-ENSP00000363081"/>
<dbReference type="PeptideAtlas" id="O94907"/>
<dbReference type="ProteomicsDB" id="50543"/>
<dbReference type="ABCD" id="O94907">
    <property type="antibodies" value="269 sequenced antibodies"/>
</dbReference>
<dbReference type="Antibodypedia" id="4049">
    <property type="antibodies" value="1019 antibodies from 48 providers"/>
</dbReference>
<dbReference type="DNASU" id="22943"/>
<dbReference type="Ensembl" id="ENST00000373970.4">
    <property type="protein sequence ID" value="ENSP00000363081.3"/>
    <property type="gene ID" value="ENSG00000107984.10"/>
</dbReference>
<dbReference type="GeneID" id="22943"/>
<dbReference type="KEGG" id="hsa:22943"/>
<dbReference type="MANE-Select" id="ENST00000373970.4">
    <property type="protein sequence ID" value="ENSP00000363081.3"/>
    <property type="RefSeq nucleotide sequence ID" value="NM_012242.4"/>
    <property type="RefSeq protein sequence ID" value="NP_036374.1"/>
</dbReference>
<dbReference type="UCSC" id="uc001jjr.4">
    <property type="organism name" value="human"/>
</dbReference>
<dbReference type="AGR" id="HGNC:2891"/>
<dbReference type="CTD" id="22943"/>
<dbReference type="DisGeNET" id="22943"/>
<dbReference type="GeneCards" id="DKK1"/>
<dbReference type="HGNC" id="HGNC:2891">
    <property type="gene designation" value="DKK1"/>
</dbReference>
<dbReference type="HPA" id="ENSG00000107984">
    <property type="expression patterns" value="Tissue enhanced (cervix, placenta)"/>
</dbReference>
<dbReference type="MalaCards" id="DKK1"/>
<dbReference type="MIM" id="605189">
    <property type="type" value="gene"/>
</dbReference>
<dbReference type="neXtProt" id="NX_O94907"/>
<dbReference type="OpenTargets" id="ENSG00000107984"/>
<dbReference type="Orphanet" id="268882">
    <property type="disease" value="Arnold-Chiari malformation type I"/>
</dbReference>
<dbReference type="Orphanet" id="85193">
    <property type="disease" value="Idiopathic juvenile osteoporosis"/>
</dbReference>
<dbReference type="PharmGKB" id="PA27345"/>
<dbReference type="VEuPathDB" id="HostDB:ENSG00000107984"/>
<dbReference type="eggNOG" id="KOG1218">
    <property type="taxonomic scope" value="Eukaryota"/>
</dbReference>
<dbReference type="GeneTree" id="ENSGT00940000161319"/>
<dbReference type="HOGENOM" id="CLU_080459_0_0_1"/>
<dbReference type="InParanoid" id="O94907"/>
<dbReference type="OMA" id="LDNYQPY"/>
<dbReference type="OrthoDB" id="4321958at2759"/>
<dbReference type="PAN-GO" id="O94907">
    <property type="GO annotations" value="4 GO annotations based on evolutionary models"/>
</dbReference>
<dbReference type="PhylomeDB" id="O94907"/>
<dbReference type="TreeFam" id="TF330916"/>
<dbReference type="PathwayCommons" id="O94907"/>
<dbReference type="Reactome" id="R-HSA-201681">
    <property type="pathway name" value="TCF dependent signaling in response to WNT"/>
</dbReference>
<dbReference type="Reactome" id="R-HSA-3772470">
    <property type="pathway name" value="Negative regulation of TCF-dependent signaling by WNT ligand antagonists"/>
</dbReference>
<dbReference type="Reactome" id="R-HSA-5339717">
    <property type="pathway name" value="Signaling by LRP5 mutants"/>
</dbReference>
<dbReference type="SignaLink" id="O94907"/>
<dbReference type="SIGNOR" id="O94907"/>
<dbReference type="BioGRID-ORCS" id="22943">
    <property type="hits" value="14 hits in 1150 CRISPR screens"/>
</dbReference>
<dbReference type="ChiTaRS" id="DKK1">
    <property type="organism name" value="human"/>
</dbReference>
<dbReference type="EvolutionaryTrace" id="O94907"/>
<dbReference type="GeneWiki" id="DKK1"/>
<dbReference type="GenomeRNAi" id="22943"/>
<dbReference type="Pharos" id="O94907">
    <property type="development level" value="Tchem"/>
</dbReference>
<dbReference type="PRO" id="PR:O94907"/>
<dbReference type="Proteomes" id="UP000005640">
    <property type="component" value="Chromosome 10"/>
</dbReference>
<dbReference type="RNAct" id="O94907">
    <property type="molecule type" value="protein"/>
</dbReference>
<dbReference type="Bgee" id="ENSG00000107984">
    <property type="expression patterns" value="Expressed in decidua and 125 other cell types or tissues"/>
</dbReference>
<dbReference type="ExpressionAtlas" id="O94907">
    <property type="expression patterns" value="baseline and differential"/>
</dbReference>
<dbReference type="GO" id="GO:0031901">
    <property type="term" value="C:early endosome membrane"/>
    <property type="evidence" value="ECO:0000304"/>
    <property type="project" value="Reactome"/>
</dbReference>
<dbReference type="GO" id="GO:0005576">
    <property type="term" value="C:extracellular region"/>
    <property type="evidence" value="ECO:0000304"/>
    <property type="project" value="Reactome"/>
</dbReference>
<dbReference type="GO" id="GO:0005615">
    <property type="term" value="C:extracellular space"/>
    <property type="evidence" value="ECO:0000314"/>
    <property type="project" value="BHF-UCL"/>
</dbReference>
<dbReference type="GO" id="GO:0005886">
    <property type="term" value="C:plasma membrane"/>
    <property type="evidence" value="ECO:0000314"/>
    <property type="project" value="MGI"/>
</dbReference>
<dbReference type="GO" id="GO:0039706">
    <property type="term" value="F:co-receptor binding"/>
    <property type="evidence" value="ECO:0000353"/>
    <property type="project" value="ParkinsonsUK-UCL"/>
</dbReference>
<dbReference type="GO" id="GO:0008083">
    <property type="term" value="F:growth factor activity"/>
    <property type="evidence" value="ECO:0000304"/>
    <property type="project" value="ProtInc"/>
</dbReference>
<dbReference type="GO" id="GO:0050750">
    <property type="term" value="F:low-density lipoprotein particle receptor binding"/>
    <property type="evidence" value="ECO:0000314"/>
    <property type="project" value="MGI"/>
</dbReference>
<dbReference type="GO" id="GO:0048019">
    <property type="term" value="F:receptor antagonist activity"/>
    <property type="evidence" value="ECO:0000314"/>
    <property type="project" value="BHF-UCL"/>
</dbReference>
<dbReference type="GO" id="GO:0060070">
    <property type="term" value="P:canonical Wnt signaling pathway"/>
    <property type="evidence" value="ECO:0007669"/>
    <property type="project" value="Ensembl"/>
</dbReference>
<dbReference type="GO" id="GO:0000902">
    <property type="term" value="P:cell morphogenesis"/>
    <property type="evidence" value="ECO:0007669"/>
    <property type="project" value="Ensembl"/>
</dbReference>
<dbReference type="GO" id="GO:0030326">
    <property type="term" value="P:embryonic limb morphogenesis"/>
    <property type="evidence" value="ECO:0007669"/>
    <property type="project" value="Ensembl"/>
</dbReference>
<dbReference type="GO" id="GO:0003197">
    <property type="term" value="P:endocardial cushion development"/>
    <property type="evidence" value="ECO:0000250"/>
    <property type="project" value="BHF-UCL"/>
</dbReference>
<dbReference type="GO" id="GO:0001706">
    <property type="term" value="P:endoderm formation"/>
    <property type="evidence" value="ECO:0007669"/>
    <property type="project" value="Ensembl"/>
</dbReference>
<dbReference type="GO" id="GO:0060325">
    <property type="term" value="P:face morphogenesis"/>
    <property type="evidence" value="ECO:0007669"/>
    <property type="project" value="Ensembl"/>
</dbReference>
<dbReference type="GO" id="GO:0030900">
    <property type="term" value="P:forebrain development"/>
    <property type="evidence" value="ECO:0007669"/>
    <property type="project" value="Ensembl"/>
</dbReference>
<dbReference type="GO" id="GO:0001942">
    <property type="term" value="P:hair follicle development"/>
    <property type="evidence" value="ECO:0007669"/>
    <property type="project" value="Ensembl"/>
</dbReference>
<dbReference type="GO" id="GO:0003129">
    <property type="term" value="P:heart induction"/>
    <property type="evidence" value="ECO:0000250"/>
    <property type="project" value="BHF-UCL"/>
</dbReference>
<dbReference type="GO" id="GO:0003170">
    <property type="term" value="P:heart valve development"/>
    <property type="evidence" value="ECO:0000250"/>
    <property type="project" value="BHF-UCL"/>
</dbReference>
<dbReference type="GO" id="GO:0007611">
    <property type="term" value="P:learning or memory"/>
    <property type="evidence" value="ECO:0000250"/>
    <property type="project" value="ARUK-UCL"/>
</dbReference>
<dbReference type="GO" id="GO:0060173">
    <property type="term" value="P:limb development"/>
    <property type="evidence" value="ECO:0000250"/>
    <property type="project" value="UniProtKB"/>
</dbReference>
<dbReference type="GO" id="GO:0001707">
    <property type="term" value="P:mesoderm formation"/>
    <property type="evidence" value="ECO:0007669"/>
    <property type="project" value="Ensembl"/>
</dbReference>
<dbReference type="GO" id="GO:0061743">
    <property type="term" value="P:motor learning"/>
    <property type="evidence" value="ECO:0007669"/>
    <property type="project" value="Ensembl"/>
</dbReference>
<dbReference type="GO" id="GO:0043066">
    <property type="term" value="P:negative regulation of apoptotic process"/>
    <property type="evidence" value="ECO:0000250"/>
    <property type="project" value="UniProtKB"/>
</dbReference>
<dbReference type="GO" id="GO:0030514">
    <property type="term" value="P:negative regulation of BMP signaling pathway"/>
    <property type="evidence" value="ECO:0007669"/>
    <property type="project" value="Ensembl"/>
</dbReference>
<dbReference type="GO" id="GO:0090090">
    <property type="term" value="P:negative regulation of canonical Wnt signaling pathway"/>
    <property type="evidence" value="ECO:0000314"/>
    <property type="project" value="ParkinsonsUK-UCL"/>
</dbReference>
<dbReference type="GO" id="GO:2000726">
    <property type="term" value="P:negative regulation of cardiac muscle cell differentiation"/>
    <property type="evidence" value="ECO:0000314"/>
    <property type="project" value="BHF-UCL"/>
</dbReference>
<dbReference type="GO" id="GO:0042662">
    <property type="term" value="P:negative regulation of mesodermal cell fate specification"/>
    <property type="evidence" value="ECO:0000314"/>
    <property type="project" value="BHF-UCL"/>
</dbReference>
<dbReference type="GO" id="GO:0010977">
    <property type="term" value="P:negative regulation of neuron projection development"/>
    <property type="evidence" value="ECO:0007669"/>
    <property type="project" value="Ensembl"/>
</dbReference>
<dbReference type="GO" id="GO:0030279">
    <property type="term" value="P:negative regulation of ossification"/>
    <property type="evidence" value="ECO:0000250"/>
    <property type="project" value="UniProtKB"/>
</dbReference>
<dbReference type="GO" id="GO:1905607">
    <property type="term" value="P:negative regulation of presynapse assembly"/>
    <property type="evidence" value="ECO:0007669"/>
    <property type="project" value="Ensembl"/>
</dbReference>
<dbReference type="GO" id="GO:0060392">
    <property type="term" value="P:negative regulation of SMAD protein signal transduction"/>
    <property type="evidence" value="ECO:0000314"/>
    <property type="project" value="BHF-UCL"/>
</dbReference>
<dbReference type="GO" id="GO:0000122">
    <property type="term" value="P:negative regulation of transcription by RNA polymerase II"/>
    <property type="evidence" value="ECO:0000314"/>
    <property type="project" value="BHF-UCL"/>
</dbReference>
<dbReference type="GO" id="GO:0030178">
    <property type="term" value="P:negative regulation of Wnt signaling pathway"/>
    <property type="evidence" value="ECO:0000314"/>
    <property type="project" value="UniProtKB"/>
</dbReference>
<dbReference type="GO" id="GO:1904723">
    <property type="term" value="P:negative regulation of Wnt-Frizzled-LRP5/6 complex assembly"/>
    <property type="evidence" value="ECO:0000314"/>
    <property type="project" value="ParkinsonsUK-UCL"/>
</dbReference>
<dbReference type="GO" id="GO:0010628">
    <property type="term" value="P:positive regulation of gene expression"/>
    <property type="evidence" value="ECO:0000316"/>
    <property type="project" value="ARUK-UCL"/>
</dbReference>
<dbReference type="GO" id="GO:0046330">
    <property type="term" value="P:positive regulation of JNK cascade"/>
    <property type="evidence" value="ECO:0000314"/>
    <property type="project" value="ARUK-UCL"/>
</dbReference>
<dbReference type="GO" id="GO:1904958">
    <property type="term" value="P:positive regulation of midbrain dopaminergic neuron differentiation"/>
    <property type="evidence" value="ECO:0007669"/>
    <property type="project" value="Ensembl"/>
</dbReference>
<dbReference type="GO" id="GO:0045813">
    <property type="term" value="P:positive regulation of Wnt signaling pathway, calcium modulating pathway"/>
    <property type="evidence" value="ECO:0000304"/>
    <property type="project" value="ARUK-UCL"/>
</dbReference>
<dbReference type="GO" id="GO:2000096">
    <property type="term" value="P:positive regulation of Wnt signaling pathway, planar cell polarity pathway"/>
    <property type="evidence" value="ECO:0000304"/>
    <property type="project" value="ARUK-UCL"/>
</dbReference>
<dbReference type="GO" id="GO:1904338">
    <property type="term" value="P:regulation of dopaminergic neuron differentiation"/>
    <property type="evidence" value="ECO:0000304"/>
    <property type="project" value="ParkinsonsUK-UCL"/>
</dbReference>
<dbReference type="GO" id="GO:0042663">
    <property type="term" value="P:regulation of endodermal cell fate specification"/>
    <property type="evidence" value="ECO:0000314"/>
    <property type="project" value="BHF-UCL"/>
</dbReference>
<dbReference type="GO" id="GO:0043523">
    <property type="term" value="P:regulation of neuron apoptotic process"/>
    <property type="evidence" value="ECO:0000250"/>
    <property type="project" value="ARUK-UCL"/>
</dbReference>
<dbReference type="GO" id="GO:0002090">
    <property type="term" value="P:regulation of receptor internalization"/>
    <property type="evidence" value="ECO:0000314"/>
    <property type="project" value="BHF-UCL"/>
</dbReference>
<dbReference type="GO" id="GO:0051966">
    <property type="term" value="P:regulation of synaptic transmission, glutamatergic"/>
    <property type="evidence" value="ECO:0007669"/>
    <property type="project" value="Ensembl"/>
</dbReference>
<dbReference type="GO" id="GO:0032526">
    <property type="term" value="P:response to retinoic acid"/>
    <property type="evidence" value="ECO:0007669"/>
    <property type="project" value="Ensembl"/>
</dbReference>
<dbReference type="GO" id="GO:0098883">
    <property type="term" value="P:synapse pruning"/>
    <property type="evidence" value="ECO:0000304"/>
    <property type="project" value="ParkinsonsUK-UCL"/>
</dbReference>
<dbReference type="GO" id="GO:0090244">
    <property type="term" value="P:Wnt signaling pathway involved in somitogenesis"/>
    <property type="evidence" value="ECO:0007669"/>
    <property type="project" value="Ensembl"/>
</dbReference>
<dbReference type="CDD" id="cd23272">
    <property type="entry name" value="Dkk1_Cys2"/>
    <property type="match status" value="1"/>
</dbReference>
<dbReference type="CDD" id="cd23026">
    <property type="entry name" value="Dkk1_N_Cys1"/>
    <property type="match status" value="1"/>
</dbReference>
<dbReference type="DisProt" id="DP01335"/>
<dbReference type="FunFam" id="2.10.80.10:FF:000001">
    <property type="entry name" value="Dickkopf WNT-signaling pathway inhibitor 2"/>
    <property type="match status" value="1"/>
</dbReference>
<dbReference type="Gene3D" id="2.10.80.10">
    <property type="entry name" value="Lipase, subunit A"/>
    <property type="match status" value="1"/>
</dbReference>
<dbReference type="IDEAL" id="IID00532"/>
<dbReference type="InterPro" id="IPR006796">
    <property type="entry name" value="Dickkopf_N"/>
</dbReference>
<dbReference type="InterPro" id="IPR048500">
    <property type="entry name" value="DIKK1/2/4_C-subdom1"/>
</dbReference>
<dbReference type="InterPro" id="IPR048499">
    <property type="entry name" value="DIKK1/2/4_C-subdom2"/>
</dbReference>
<dbReference type="InterPro" id="IPR039863">
    <property type="entry name" value="DKK1-4"/>
</dbReference>
<dbReference type="InterPro" id="IPR047304">
    <property type="entry name" value="Dkk1_Cys2"/>
</dbReference>
<dbReference type="InterPro" id="IPR047305">
    <property type="entry name" value="Dkk1_N"/>
</dbReference>
<dbReference type="PANTHER" id="PTHR12113:SF11">
    <property type="entry name" value="DICKKOPF-RELATED PROTEIN 1"/>
    <property type="match status" value="1"/>
</dbReference>
<dbReference type="PANTHER" id="PTHR12113">
    <property type="entry name" value="DICKKOPF3-LIKE 3"/>
    <property type="match status" value="1"/>
</dbReference>
<dbReference type="Pfam" id="PF04706">
    <property type="entry name" value="Dickkopf_N"/>
    <property type="match status" value="1"/>
</dbReference>
<dbReference type="Pfam" id="PF21481">
    <property type="entry name" value="DIKK1-2-4_C-subdom1"/>
    <property type="match status" value="1"/>
</dbReference>
<dbReference type="Pfam" id="PF21479">
    <property type="entry name" value="DIKK1-2-4_C-subdom2"/>
    <property type="match status" value="1"/>
</dbReference>
<keyword id="KW-0002">3D-structure</keyword>
<keyword id="KW-0217">Developmental protein</keyword>
<keyword id="KW-0903">Direct protein sequencing</keyword>
<keyword id="KW-1015">Disulfide bond</keyword>
<keyword id="KW-0325">Glycoprotein</keyword>
<keyword id="KW-1267">Proteomics identification</keyword>
<keyword id="KW-1185">Reference proteome</keyword>
<keyword id="KW-0964">Secreted</keyword>
<keyword id="KW-0732">Signal</keyword>
<keyword id="KW-0879">Wnt signaling pathway</keyword>
<name>DKK1_HUMAN</name>
<evidence type="ECO:0000250" key="1"/>
<evidence type="ECO:0000250" key="2">
    <source>
        <dbReference type="UniProtKB" id="O54908"/>
    </source>
</evidence>
<evidence type="ECO:0000269" key="3">
    <source>
    </source>
</evidence>
<evidence type="ECO:0000269" key="4">
    <source>
    </source>
</evidence>
<evidence type="ECO:0000269" key="5">
    <source>
    </source>
</evidence>
<evidence type="ECO:0000269" key="6">
    <source>
    </source>
</evidence>
<evidence type="ECO:0000269" key="7">
    <source>
    </source>
</evidence>
<evidence type="ECO:0000269" key="8">
    <source>
    </source>
</evidence>
<evidence type="ECO:0000269" key="9">
    <source>
    </source>
</evidence>
<evidence type="ECO:0000269" key="10">
    <source>
    </source>
</evidence>
<evidence type="ECO:0000303" key="11">
    <source>
    </source>
</evidence>
<evidence type="ECO:0000305" key="12"/>
<evidence type="ECO:0007829" key="13">
    <source>
        <dbReference type="PDB" id="3S2K"/>
    </source>
</evidence>
<evidence type="ECO:0007829" key="14">
    <source>
        <dbReference type="PDB" id="5FWW"/>
    </source>
</evidence>
<gene>
    <name type="primary">DKK1</name>
    <name type="ORF">UNQ492/PRO1008</name>
</gene>
<reference key="1">
    <citation type="journal article" date="1999" name="J. Biol. Chem.">
        <title>Isolation and biochemical characterization of the human Dkk-1 homologue, a novel inhibitor of mammalian Wnt signaling.</title>
        <authorList>
            <person name="Fedi P."/>
            <person name="Bafico A."/>
            <person name="Nieto Soria A."/>
            <person name="Burgess W.H."/>
            <person name="Miki T."/>
            <person name="Bottaro D.P."/>
            <person name="Kraus M.H."/>
            <person name="Aaronson S.A."/>
        </authorList>
    </citation>
    <scope>NUCLEOTIDE SEQUENCE [MRNA]</scope>
    <source>
        <tissue>Leiomyosarcoma</tissue>
    </source>
</reference>
<reference key="2">
    <citation type="journal article" date="1999" name="Gene">
        <title>Functional and structural diversity of the human Dickkopf gene family.</title>
        <authorList>
            <person name="Krupnik V.E."/>
            <person name="Sharp J.D."/>
            <person name="Jiang C."/>
            <person name="Robison K."/>
            <person name="Chickering T.W."/>
            <person name="Amaravadi L."/>
            <person name="Brown D.E."/>
            <person name="Guyot D."/>
            <person name="Mays G."/>
            <person name="Leiby K."/>
            <person name="Chang B."/>
            <person name="Duong T."/>
            <person name="Goodearl A.D.J."/>
            <person name="Gearing D.P."/>
            <person name="Sokol S.Y."/>
            <person name="McCarthy S.A."/>
        </authorList>
    </citation>
    <scope>NUCLEOTIDE SEQUENCE [MRNA]</scope>
    <source>
        <tissue>Fetal kidney</tissue>
    </source>
</reference>
<reference key="3">
    <citation type="submission" date="1998-11" db="EMBL/GenBank/DDBJ databases">
        <authorList>
            <person name="Tate G."/>
            <person name="Suzuki T."/>
            <person name="Mitsuya T."/>
        </authorList>
    </citation>
    <scope>NUCLEOTIDE SEQUENCE [GENOMIC DNA]</scope>
</reference>
<reference key="4">
    <citation type="journal article" date="2000" name="Cytogenet. Cell Genet.">
        <title>The genomic structure, chromosome location, and analysis of the human DKK1 head inducer gene as a candidate for holoprosencephaly.</title>
        <authorList>
            <person name="Roessler E."/>
            <person name="Du Y."/>
            <person name="Glinka A."/>
            <person name="Dutra A."/>
            <person name="Niehrs C."/>
            <person name="Muenke M."/>
        </authorList>
    </citation>
    <scope>NUCLEOTIDE SEQUENCE [GENOMIC DNA]</scope>
</reference>
<reference key="5">
    <citation type="journal article" date="2003" name="Genome Res.">
        <title>The secreted protein discovery initiative (SPDI), a large-scale effort to identify novel human secreted and transmembrane proteins: a bioinformatics assessment.</title>
        <authorList>
            <person name="Clark H.F."/>
            <person name="Gurney A.L."/>
            <person name="Abaya E."/>
            <person name="Baker K."/>
            <person name="Baldwin D.T."/>
            <person name="Brush J."/>
            <person name="Chen J."/>
            <person name="Chow B."/>
            <person name="Chui C."/>
            <person name="Crowley C."/>
            <person name="Currell B."/>
            <person name="Deuel B."/>
            <person name="Dowd P."/>
            <person name="Eaton D."/>
            <person name="Foster J.S."/>
            <person name="Grimaldi C."/>
            <person name="Gu Q."/>
            <person name="Hass P.E."/>
            <person name="Heldens S."/>
            <person name="Huang A."/>
            <person name="Kim H.S."/>
            <person name="Klimowski L."/>
            <person name="Jin Y."/>
            <person name="Johnson S."/>
            <person name="Lee J."/>
            <person name="Lewis L."/>
            <person name="Liao D."/>
            <person name="Mark M.R."/>
            <person name="Robbie E."/>
            <person name="Sanchez C."/>
            <person name="Schoenfeld J."/>
            <person name="Seshagiri S."/>
            <person name="Simmons L."/>
            <person name="Singh J."/>
            <person name="Smith V."/>
            <person name="Stinson J."/>
            <person name="Vagts A."/>
            <person name="Vandlen R.L."/>
            <person name="Watanabe C."/>
            <person name="Wieand D."/>
            <person name="Woods K."/>
            <person name="Xie M.-H."/>
            <person name="Yansura D.G."/>
            <person name="Yi S."/>
            <person name="Yu G."/>
            <person name="Yuan J."/>
            <person name="Zhang M."/>
            <person name="Zhang Z."/>
            <person name="Goddard A.D."/>
            <person name="Wood W.I."/>
            <person name="Godowski P.J."/>
            <person name="Gray A.M."/>
        </authorList>
    </citation>
    <scope>NUCLEOTIDE SEQUENCE [LARGE SCALE MRNA]</scope>
</reference>
<reference key="6">
    <citation type="journal article" date="2004" name="Nat. Genet.">
        <title>Complete sequencing and characterization of 21,243 full-length human cDNAs.</title>
        <authorList>
            <person name="Ota T."/>
            <person name="Suzuki Y."/>
            <person name="Nishikawa T."/>
            <person name="Otsuki T."/>
            <person name="Sugiyama T."/>
            <person name="Irie R."/>
            <person name="Wakamatsu A."/>
            <person name="Hayashi K."/>
            <person name="Sato H."/>
            <person name="Nagai K."/>
            <person name="Kimura K."/>
            <person name="Makita H."/>
            <person name="Sekine M."/>
            <person name="Obayashi M."/>
            <person name="Nishi T."/>
            <person name="Shibahara T."/>
            <person name="Tanaka T."/>
            <person name="Ishii S."/>
            <person name="Yamamoto J."/>
            <person name="Saito K."/>
            <person name="Kawai Y."/>
            <person name="Isono Y."/>
            <person name="Nakamura Y."/>
            <person name="Nagahari K."/>
            <person name="Murakami K."/>
            <person name="Yasuda T."/>
            <person name="Iwayanagi T."/>
            <person name="Wagatsuma M."/>
            <person name="Shiratori A."/>
            <person name="Sudo H."/>
            <person name="Hosoiri T."/>
            <person name="Kaku Y."/>
            <person name="Kodaira H."/>
            <person name="Kondo H."/>
            <person name="Sugawara M."/>
            <person name="Takahashi M."/>
            <person name="Kanda K."/>
            <person name="Yokoi T."/>
            <person name="Furuya T."/>
            <person name="Kikkawa E."/>
            <person name="Omura Y."/>
            <person name="Abe K."/>
            <person name="Kamihara K."/>
            <person name="Katsuta N."/>
            <person name="Sato K."/>
            <person name="Tanikawa M."/>
            <person name="Yamazaki M."/>
            <person name="Ninomiya K."/>
            <person name="Ishibashi T."/>
            <person name="Yamashita H."/>
            <person name="Murakawa K."/>
            <person name="Fujimori K."/>
            <person name="Tanai H."/>
            <person name="Kimata M."/>
            <person name="Watanabe M."/>
            <person name="Hiraoka S."/>
            <person name="Chiba Y."/>
            <person name="Ishida S."/>
            <person name="Ono Y."/>
            <person name="Takiguchi S."/>
            <person name="Watanabe S."/>
            <person name="Yosida M."/>
            <person name="Hotuta T."/>
            <person name="Kusano J."/>
            <person name="Kanehori K."/>
            <person name="Takahashi-Fujii A."/>
            <person name="Hara H."/>
            <person name="Tanase T.-O."/>
            <person name="Nomura Y."/>
            <person name="Togiya S."/>
            <person name="Komai F."/>
            <person name="Hara R."/>
            <person name="Takeuchi K."/>
            <person name="Arita M."/>
            <person name="Imose N."/>
            <person name="Musashino K."/>
            <person name="Yuuki H."/>
            <person name="Oshima A."/>
            <person name="Sasaki N."/>
            <person name="Aotsuka S."/>
            <person name="Yoshikawa Y."/>
            <person name="Matsunawa H."/>
            <person name="Ichihara T."/>
            <person name="Shiohata N."/>
            <person name="Sano S."/>
            <person name="Moriya S."/>
            <person name="Momiyama H."/>
            <person name="Satoh N."/>
            <person name="Takami S."/>
            <person name="Terashima Y."/>
            <person name="Suzuki O."/>
            <person name="Nakagawa S."/>
            <person name="Senoh A."/>
            <person name="Mizoguchi H."/>
            <person name="Goto Y."/>
            <person name="Shimizu F."/>
            <person name="Wakebe H."/>
            <person name="Hishigaki H."/>
            <person name="Watanabe T."/>
            <person name="Sugiyama A."/>
            <person name="Takemoto M."/>
            <person name="Kawakami B."/>
            <person name="Yamazaki M."/>
            <person name="Watanabe K."/>
            <person name="Kumagai A."/>
            <person name="Itakura S."/>
            <person name="Fukuzumi Y."/>
            <person name="Fujimori Y."/>
            <person name="Komiyama M."/>
            <person name="Tashiro H."/>
            <person name="Tanigami A."/>
            <person name="Fujiwara T."/>
            <person name="Ono T."/>
            <person name="Yamada K."/>
            <person name="Fujii Y."/>
            <person name="Ozaki K."/>
            <person name="Hirao M."/>
            <person name="Ohmori Y."/>
            <person name="Kawabata A."/>
            <person name="Hikiji T."/>
            <person name="Kobatake N."/>
            <person name="Inagaki H."/>
            <person name="Ikema Y."/>
            <person name="Okamoto S."/>
            <person name="Okitani R."/>
            <person name="Kawakami T."/>
            <person name="Noguchi S."/>
            <person name="Itoh T."/>
            <person name="Shigeta K."/>
            <person name="Senba T."/>
            <person name="Matsumura K."/>
            <person name="Nakajima Y."/>
            <person name="Mizuno T."/>
            <person name="Morinaga M."/>
            <person name="Sasaki M."/>
            <person name="Togashi T."/>
            <person name="Oyama M."/>
            <person name="Hata H."/>
            <person name="Watanabe M."/>
            <person name="Komatsu T."/>
            <person name="Mizushima-Sugano J."/>
            <person name="Satoh T."/>
            <person name="Shirai Y."/>
            <person name="Takahashi Y."/>
            <person name="Nakagawa K."/>
            <person name="Okumura K."/>
            <person name="Nagase T."/>
            <person name="Nomura N."/>
            <person name="Kikuchi H."/>
            <person name="Masuho Y."/>
            <person name="Yamashita R."/>
            <person name="Nakai K."/>
            <person name="Yada T."/>
            <person name="Nakamura Y."/>
            <person name="Ohara O."/>
            <person name="Isogai T."/>
            <person name="Sugano S."/>
        </authorList>
    </citation>
    <scope>NUCLEOTIDE SEQUENCE [LARGE SCALE MRNA]</scope>
    <source>
        <tissue>Cerebellum</tissue>
    </source>
</reference>
<reference key="7">
    <citation type="submission" date="2005-07" db="EMBL/GenBank/DDBJ databases">
        <authorList>
            <person name="Mural R.J."/>
            <person name="Istrail S."/>
            <person name="Sutton G.G."/>
            <person name="Florea L."/>
            <person name="Halpern A.L."/>
            <person name="Mobarry C.M."/>
            <person name="Lippert R."/>
            <person name="Walenz B."/>
            <person name="Shatkay H."/>
            <person name="Dew I."/>
            <person name="Miller J.R."/>
            <person name="Flanigan M.J."/>
            <person name="Edwards N.J."/>
            <person name="Bolanos R."/>
            <person name="Fasulo D."/>
            <person name="Halldorsson B.V."/>
            <person name="Hannenhalli S."/>
            <person name="Turner R."/>
            <person name="Yooseph S."/>
            <person name="Lu F."/>
            <person name="Nusskern D.R."/>
            <person name="Shue B.C."/>
            <person name="Zheng X.H."/>
            <person name="Zhong F."/>
            <person name="Delcher A.L."/>
            <person name="Huson D.H."/>
            <person name="Kravitz S.A."/>
            <person name="Mouchard L."/>
            <person name="Reinert K."/>
            <person name="Remington K.A."/>
            <person name="Clark A.G."/>
            <person name="Waterman M.S."/>
            <person name="Eichler E.E."/>
            <person name="Adams M.D."/>
            <person name="Hunkapiller M.W."/>
            <person name="Myers E.W."/>
            <person name="Venter J.C."/>
        </authorList>
    </citation>
    <scope>NUCLEOTIDE SEQUENCE [LARGE SCALE GENOMIC DNA]</scope>
</reference>
<reference key="8">
    <citation type="journal article" date="2004" name="Genome Res.">
        <title>The status, quality, and expansion of the NIH full-length cDNA project: the Mammalian Gene Collection (MGC).</title>
        <authorList>
            <consortium name="The MGC Project Team"/>
        </authorList>
    </citation>
    <scope>NUCLEOTIDE SEQUENCE [LARGE SCALE MRNA]</scope>
    <source>
        <tissue>Brain</tissue>
    </source>
</reference>
<reference key="9">
    <citation type="journal article" date="2004" name="Protein Sci.">
        <title>Signal peptide prediction based on analysis of experimentally verified cleavage sites.</title>
        <authorList>
            <person name="Zhang Z."/>
            <person name="Henzel W.J."/>
        </authorList>
    </citation>
    <scope>PROTEIN SEQUENCE OF 32-46</scope>
</reference>
<reference key="10">
    <citation type="journal article" date="2001" name="Curr. Biol.">
        <title>Head inducer Dickkopf-1 is a ligand for Wnt coreceptor LRP6.</title>
        <authorList>
            <person name="Semenov M.V."/>
            <person name="Tamai K."/>
            <person name="Brott B.K."/>
            <person name="Kuhl M."/>
            <person name="Sokol S."/>
            <person name="He X."/>
        </authorList>
    </citation>
    <scope>INTERACTION WITH LRP6</scope>
</reference>
<reference key="11">
    <citation type="journal article" date="2006" name="Oncogene">
        <title>Function and biological roles of the Dickkopf family of Wnt modulators.</title>
        <authorList>
            <person name="Niehrs C."/>
        </authorList>
    </citation>
    <scope>REVIEW OF THE DKK FAMILY</scope>
    <scope>FUNCTION</scope>
</reference>
<reference key="12">
    <citation type="journal article" date="2007" name="Proc. Natl. Acad. Sci. U.S.A.">
        <title>R-Spondin1 regulates Wnt signaling by inhibiting internalization of LRP6.</title>
        <authorList>
            <person name="Binnerts M.E."/>
            <person name="Kim K.A."/>
            <person name="Bright J.M."/>
            <person name="Patel S.M."/>
            <person name="Tran K."/>
            <person name="Zhou M."/>
            <person name="Leung J.M."/>
            <person name="Liu Y."/>
            <person name="Lomas W.E. III"/>
            <person name="Dixon M."/>
            <person name="Hazell S.A."/>
            <person name="Wagle M."/>
            <person name="Nie W.S."/>
            <person name="Tomasevic N."/>
            <person name="Williams J."/>
            <person name="Zhan X."/>
            <person name="Levy M.D."/>
            <person name="Funk W.D."/>
            <person name="Abo A."/>
        </authorList>
    </citation>
    <scope>INTERACTION WITH LRP6 AND KREM1</scope>
</reference>
<reference key="13">
    <citation type="journal article" date="2009" name="J. Cell. Biochem.">
        <title>A cell-based Dkk1 binding assay reveals roles for extracellular domains of LRP5 in Dkk1 interaction and highlights differences between wild-type and the high bone mass mutant LRP5(G171V).</title>
        <authorList>
            <person name="Murrills R.J."/>
            <person name="Matteo J.J."/>
            <person name="Bhat B.M."/>
            <person name="Coleburn V.E."/>
            <person name="Allen K.M."/>
            <person name="Chen W."/>
            <person name="Damagnez V."/>
            <person name="Bhat R.A."/>
            <person name="Bex F.J."/>
            <person name="Bodine P.V."/>
        </authorList>
    </citation>
    <scope>INTERACTION WITH LRP5</scope>
</reference>
<reference key="14">
    <citation type="journal article" date="2010" name="J. Biol. Chem.">
        <title>Reconstitution of a frizzled8.Wnt3a.LRP6 signaling complex reveals multiple Wnt and Dkk1 binding sites on LRP6.</title>
        <authorList>
            <person name="Bourhis E."/>
            <person name="Tam C."/>
            <person name="Franke Y."/>
            <person name="Bazan J.F."/>
            <person name="Ernst J."/>
            <person name="Hwang J."/>
            <person name="Costa M."/>
            <person name="Cochran A.G."/>
            <person name="Hannoush R.N."/>
        </authorList>
    </citation>
    <scope>INTERACTION WITH LRP6</scope>
</reference>
<reference key="15">
    <citation type="journal article" date="2011" name="Protein Sci.">
        <title>Human Dickkopf-1 (huDKK1) protein: characterization of glycosylation and determination of disulfide linkages in the two cysteine-rich domains.</title>
        <authorList>
            <person name="Haniu M."/>
            <person name="Horan T."/>
            <person name="Spahr C."/>
            <person name="Hui J."/>
            <person name="Fan W."/>
            <person name="Chen C."/>
            <person name="Richards W.G."/>
            <person name="Lu H.S."/>
        </authorList>
    </citation>
    <scope>GLYCOSYLATION AT SER-61 AND ASN-256</scope>
    <scope>DISULFIDE BONDS</scope>
</reference>
<reference key="16">
    <citation type="journal article" date="2016" name="Structure">
        <title>Structure of the dual-mode wnt regulator Kremen1 and insight into ternary complex formation with LRP6 and Dickkopf.</title>
        <authorList>
            <person name="Zebisch M."/>
            <person name="Jackson V.A."/>
            <person name="Zhao Y."/>
            <person name="Jones E.Y."/>
        </authorList>
    </citation>
    <scope>IDENTIFICATION IN A TERNARY COMPLEX WITH KREM1 AND LRP6</scope>
</reference>
<reference key="17">
    <citation type="journal article" date="2011" name="Dev. Cell">
        <title>Structural basis of Wnt signaling inhibition by Dickkopf binding to LRP5/6.</title>
        <authorList>
            <person name="Ahn V.E."/>
            <person name="Chu M.L."/>
            <person name="Choi H.J."/>
            <person name="Tran D."/>
            <person name="Abo A."/>
            <person name="Weis W.I."/>
        </authorList>
    </citation>
    <scope>X-RAY CRYSTALLOGRAPHY (2.8 ANGSTROMS) OF 178-266 IN COMPLEX WITH LRP6</scope>
    <scope>FUNCTION</scope>
    <scope>DISULFIDE BONDS</scope>
</reference>
<sequence>MMALGAAGATRVFVAMVAAALGGHPLLGVSATLNSVLNSNAIKNLPPPLGGAAGHPGSAVSAAPGILYPGGNKYQTIDNYQPYPCAEDEECGTDEYCASPTRGGDAGVQICLACRKRRKRCMRHAMCCPGNYCKNGICVSSDQNHFRGEIEETITESFGNDHSTLDGYSRRTTLSSKMYHTKGQEGSVCLRSSDCASGLCCARHFWSKICKPVLKEGQVCTKHRRKGSHGLEIFQRCYCGEGLSCRIQKDHHQASNSSRLHTCQRH</sequence>
<protein>
    <recommendedName>
        <fullName>Dickkopf-related protein 1</fullName>
        <shortName>Dickkopf-1</shortName>
        <shortName>Dkk-1</shortName>
        <shortName>hDkk-1</shortName>
    </recommendedName>
    <alternativeName>
        <fullName>SK</fullName>
    </alternativeName>
</protein>
<proteinExistence type="evidence at protein level"/>
<comment type="function">
    <text evidence="2 9 11">Antagonizes canonical Wnt signaling by inhibiting LRP5/6 interaction with Wnt and by forming a ternary complex with the transmembrane protein KREMEN that promotes internalization of LRP5/6 (PubMed:22000856). DKKs play an important role in vertebrate development, where they locally inhibit Wnt regulated processes such as antero-posterior axial patterning, limb development, somitogenesis and eye formation. In the adult, Dkks are implicated in bone formation and bone disease, cancer and Alzheimer disease (PubMed:17143291). Inhibits the pro-apoptotic function of KREMEN1 in a Wnt-independent manner, and has anti-apoptotic activity (By similarity).</text>
</comment>
<comment type="subunit">
    <text evidence="3 5 6 7 9 10">Interacts with LRP6 (PubMed:11448771, PubMed:17804805, PubMed:20093360, PubMed:22000856). Interacts (via the C-terminal Cys-rich domain) with LRP5 (via beta-propeller regions 3 and 4); the interaction, enhanced by MESD and or KREMEN, antagonizes Wnt-mediated signaling (PubMed:19746449). Forms a ternary complex with LRP6 and KREM1 (PubMed:27524201). Interacts with KREM1 (PubMed:17804805).</text>
</comment>
<comment type="interaction">
    <interactant intactId="EBI-742864">
        <id>O94907</id>
    </interactant>
    <interactant intactId="EBI-15656184">
        <id>Q96MU8</id>
        <label>KREMEN1</label>
    </interactant>
    <organismsDiffer>false</organismsDiffer>
    <experiments>3</experiments>
</comment>
<comment type="interaction">
    <interactant intactId="EBI-742864">
        <id>O94907</id>
    </interactant>
    <interactant intactId="EBI-910915">
        <id>O75581</id>
        <label>LRP6</label>
    </interactant>
    <organismsDiffer>false</organismsDiffer>
    <experiments>18</experiments>
</comment>
<comment type="interaction">
    <interactant intactId="EBI-742864">
        <id>O94907</id>
    </interactant>
    <interactant intactId="EBI-724076">
        <id>Q99750</id>
        <label>MDFI</label>
    </interactant>
    <organismsDiffer>false</organismsDiffer>
    <experiments>4</experiments>
</comment>
<comment type="subcellular location">
    <subcellularLocation>
        <location>Secreted</location>
    </subcellularLocation>
</comment>
<comment type="tissue specificity">
    <text>Placenta.</text>
</comment>
<comment type="domain">
    <text evidence="1">The C-terminal cysteine-rich domain mediates interaction with LRP5 and LRP6.</text>
</comment>
<comment type="similarity">
    <text evidence="12">Belongs to the dickkopf family.</text>
</comment>
<comment type="online information" name="Atlas of Genetics and Cytogenetics in Oncology and Haematology">
    <link uri="https://atlasgeneticsoncology.org/gene/44007/DKK1"/>
</comment>
<accession>O94907</accession>
<accession>B2RC19</accession>
<organism>
    <name type="scientific">Homo sapiens</name>
    <name type="common">Human</name>
    <dbReference type="NCBI Taxonomy" id="9606"/>
    <lineage>
        <taxon>Eukaryota</taxon>
        <taxon>Metazoa</taxon>
        <taxon>Chordata</taxon>
        <taxon>Craniata</taxon>
        <taxon>Vertebrata</taxon>
        <taxon>Euteleostomi</taxon>
        <taxon>Mammalia</taxon>
        <taxon>Eutheria</taxon>
        <taxon>Euarchontoglires</taxon>
        <taxon>Primates</taxon>
        <taxon>Haplorrhini</taxon>
        <taxon>Catarrhini</taxon>
        <taxon>Hominidae</taxon>
        <taxon>Homo</taxon>
    </lineage>
</organism>